<protein>
    <recommendedName>
        <fullName evidence="1">UPF0391 membrane protein YtjA</fullName>
    </recommendedName>
</protein>
<feature type="chain" id="PRO_1000143724" description="UPF0391 membrane protein YtjA">
    <location>
        <begin position="1"/>
        <end position="53"/>
    </location>
</feature>
<feature type="transmembrane region" description="Helical" evidence="1">
    <location>
        <begin position="4"/>
        <end position="24"/>
    </location>
</feature>
<feature type="transmembrane region" description="Helical" evidence="1">
    <location>
        <begin position="30"/>
        <end position="48"/>
    </location>
</feature>
<organism>
    <name type="scientific">Salmonella newport (strain SL254)</name>
    <dbReference type="NCBI Taxonomy" id="423368"/>
    <lineage>
        <taxon>Bacteria</taxon>
        <taxon>Pseudomonadati</taxon>
        <taxon>Pseudomonadota</taxon>
        <taxon>Gammaproteobacteria</taxon>
        <taxon>Enterobacterales</taxon>
        <taxon>Enterobacteriaceae</taxon>
        <taxon>Salmonella</taxon>
    </lineage>
</organism>
<reference key="1">
    <citation type="journal article" date="2011" name="J. Bacteriol.">
        <title>Comparative genomics of 28 Salmonella enterica isolates: evidence for CRISPR-mediated adaptive sublineage evolution.</title>
        <authorList>
            <person name="Fricke W.F."/>
            <person name="Mammel M.K."/>
            <person name="McDermott P.F."/>
            <person name="Tartera C."/>
            <person name="White D.G."/>
            <person name="Leclerc J.E."/>
            <person name="Ravel J."/>
            <person name="Cebula T.A."/>
        </authorList>
    </citation>
    <scope>NUCLEOTIDE SEQUENCE [LARGE SCALE GENOMIC DNA]</scope>
    <source>
        <strain>SL254</strain>
    </source>
</reference>
<proteinExistence type="inferred from homology"/>
<sequence>MFRWGIIFLVIALIAAALGFGGLAGTAAGAAKIVFVVGIVLFLVSLFMGRKRP</sequence>
<dbReference type="EMBL" id="CP001113">
    <property type="protein sequence ID" value="ACF64067.1"/>
    <property type="molecule type" value="Genomic_DNA"/>
</dbReference>
<dbReference type="RefSeq" id="WP_000490276.1">
    <property type="nucleotide sequence ID" value="NZ_CCMR01000003.1"/>
</dbReference>
<dbReference type="KEGG" id="see:SNSL254_A4918"/>
<dbReference type="HOGENOM" id="CLU_187346_2_0_6"/>
<dbReference type="Proteomes" id="UP000008824">
    <property type="component" value="Chromosome"/>
</dbReference>
<dbReference type="GO" id="GO:0005886">
    <property type="term" value="C:plasma membrane"/>
    <property type="evidence" value="ECO:0007669"/>
    <property type="project" value="UniProtKB-SubCell"/>
</dbReference>
<dbReference type="HAMAP" id="MF_01361">
    <property type="entry name" value="UPF0391"/>
    <property type="match status" value="1"/>
</dbReference>
<dbReference type="InterPro" id="IPR009760">
    <property type="entry name" value="DUF1328"/>
</dbReference>
<dbReference type="NCBIfam" id="NF010229">
    <property type="entry name" value="PRK13682.1-4"/>
    <property type="match status" value="1"/>
</dbReference>
<dbReference type="NCBIfam" id="NF010230">
    <property type="entry name" value="PRK13682.1-5"/>
    <property type="match status" value="1"/>
</dbReference>
<dbReference type="Pfam" id="PF07043">
    <property type="entry name" value="DUF1328"/>
    <property type="match status" value="1"/>
</dbReference>
<dbReference type="PIRSF" id="PIRSF036466">
    <property type="entry name" value="UCP036466"/>
    <property type="match status" value="1"/>
</dbReference>
<name>YTJA_SALNS</name>
<accession>B4T4G5</accession>
<keyword id="KW-1003">Cell membrane</keyword>
<keyword id="KW-0472">Membrane</keyword>
<keyword id="KW-0812">Transmembrane</keyword>
<keyword id="KW-1133">Transmembrane helix</keyword>
<gene>
    <name evidence="1" type="primary">ytjA</name>
    <name type="ordered locus">SNSL254_A4918</name>
</gene>
<evidence type="ECO:0000255" key="1">
    <source>
        <dbReference type="HAMAP-Rule" id="MF_01361"/>
    </source>
</evidence>
<comment type="subcellular location">
    <subcellularLocation>
        <location evidence="1">Cell membrane</location>
        <topology evidence="1">Multi-pass membrane protein</topology>
    </subcellularLocation>
</comment>
<comment type="similarity">
    <text evidence="1">Belongs to the UPF0391 family.</text>
</comment>